<proteinExistence type="evidence at protein level"/>
<name>BACR2_HALMA</name>
<accession>Q5V0R5</accession>
<evidence type="ECO:0000250" key="1"/>
<evidence type="ECO:0000255" key="2"/>
<evidence type="ECO:0000269" key="3">
    <source>
    </source>
</evidence>
<evidence type="ECO:0000305" key="4"/>
<sequence length="250" mass="27003">MLPLQVSSLGVEGEGIWLALGTVGMLLGMVYFMAKGWDVQDPEQEEFYVITILIAGIAASSYLSMFFGFGLTEVELVNGRVIDVYWARYADWLFTTPLLLLDIGLLAGASNRDMASLITIDAFMIVTGLAATLMKVPVARYAFWTISTIAMLFVLYYLVVVVGEAASDASEEAQSTFNVLRNIILVAWAIYPVAWLVGTEGLGLVGLFGETLLFMILDLTAKIGFGFILLRSRAIVGGDSAPTPSAEAAD</sequence>
<reference key="1">
    <citation type="journal article" date="2004" name="Genome Res.">
        <title>Genome sequence of Haloarcula marismortui: a halophilic archaeon from the Dead Sea.</title>
        <authorList>
            <person name="Baliga N.S."/>
            <person name="Bonneau R."/>
            <person name="Facciotti M.T."/>
            <person name="Pan M."/>
            <person name="Glusman G."/>
            <person name="Deutsch E.W."/>
            <person name="Shannon P."/>
            <person name="Chiu Y."/>
            <person name="Weng R.S."/>
            <person name="Gan R.R."/>
            <person name="Hung P."/>
            <person name="Date S.V."/>
            <person name="Marcotte E."/>
            <person name="Hood L."/>
            <person name="Ng W.V."/>
        </authorList>
    </citation>
    <scope>NUCLEOTIDE SEQUENCE [LARGE SCALE GENOMIC DNA]</scope>
    <source>
        <strain>ATCC 43049 / DSM 3752 / JCM 8966 / VKM B-1809</strain>
    </source>
</reference>
<reference key="2">
    <citation type="journal article" date="2010" name="J. Bacteriol.">
        <title>A novel six-rhodopsin system in a single archaeon.</title>
        <authorList>
            <person name="Fu H.Y."/>
            <person name="Lin Y.C."/>
            <person name="Chang Y.N."/>
            <person name="Tseng H."/>
            <person name="Huang C.C."/>
            <person name="Liu K.C."/>
            <person name="Huang C.S."/>
            <person name="Su C.W."/>
            <person name="Weng R.R."/>
            <person name="Lee Y.Y."/>
            <person name="Ng W.V."/>
            <person name="Yang C.S."/>
        </authorList>
    </citation>
    <scope>FUNCTION</scope>
    <scope>INDUCTION</scope>
    <scope>CHARACTERIZATION</scope>
    <scope>BIOPHYSICOCHEMICAL PROPERTIES</scope>
</reference>
<comment type="function">
    <text evidence="3">Light-driven proton pump.</text>
</comment>
<comment type="biophysicochemical properties">
    <absorption>
        <max evidence="3">552 nm</max>
        <text>Unchanged lambda max with pHs of 3.0 to 9.0.</text>
    </absorption>
</comment>
<comment type="subcellular location">
    <subcellularLocation>
        <location evidence="4">Membrane</location>
        <topology evidence="4">Multi-pass membrane protein</topology>
    </subcellularLocation>
</comment>
<comment type="induction">
    <text evidence="3">Expressed constitutively throughout the growth phases, both in presence and absence of white light.</text>
</comment>
<comment type="PTM">
    <text evidence="1">The covalent binding of retinal to the apoprotein, bacterioopsin, generates bacteriorhodopsin.</text>
</comment>
<comment type="similarity">
    <text evidence="4">Belongs to the archaeal/bacterial/fungal opsin family.</text>
</comment>
<organism>
    <name type="scientific">Haloarcula marismortui (strain ATCC 43049 / DSM 3752 / JCM 8966 / VKM B-1809)</name>
    <name type="common">Halobacterium marismortui</name>
    <dbReference type="NCBI Taxonomy" id="272569"/>
    <lineage>
        <taxon>Archaea</taxon>
        <taxon>Methanobacteriati</taxon>
        <taxon>Methanobacteriota</taxon>
        <taxon>Stenosarchaea group</taxon>
        <taxon>Halobacteria</taxon>
        <taxon>Halobacteriales</taxon>
        <taxon>Haloarculaceae</taxon>
        <taxon>Haloarcula</taxon>
    </lineage>
</organism>
<keyword id="KW-0157">Chromophore</keyword>
<keyword id="KW-0375">Hydrogen ion transport</keyword>
<keyword id="KW-0406">Ion transport</keyword>
<keyword id="KW-0472">Membrane</keyword>
<keyword id="KW-0600">Photoreceptor protein</keyword>
<keyword id="KW-0675">Receptor</keyword>
<keyword id="KW-1185">Reference proteome</keyword>
<keyword id="KW-0681">Retinal protein</keyword>
<keyword id="KW-0716">Sensory transduction</keyword>
<keyword id="KW-0812">Transmembrane</keyword>
<keyword id="KW-1133">Transmembrane helix</keyword>
<keyword id="KW-0813">Transport</keyword>
<gene>
    <name type="primary">xop1</name>
    <name type="ordered locus">rrnAC2030</name>
</gene>
<feature type="chain" id="PRO_0000428850" description="Bacteriorhodopsin-II">
    <location>
        <begin position="1"/>
        <end position="250"/>
    </location>
</feature>
<feature type="transmembrane region" description="Helical" evidence="2">
    <location>
        <begin position="14"/>
        <end position="34"/>
    </location>
</feature>
<feature type="transmembrane region" description="Helical" evidence="2">
    <location>
        <begin position="49"/>
        <end position="69"/>
    </location>
</feature>
<feature type="transmembrane region" description="Helical" evidence="2">
    <location>
        <begin position="89"/>
        <end position="109"/>
    </location>
</feature>
<feature type="transmembrane region" description="Helical" evidence="2">
    <location>
        <begin position="114"/>
        <end position="134"/>
    </location>
</feature>
<feature type="transmembrane region" description="Helical" evidence="2">
    <location>
        <begin position="142"/>
        <end position="162"/>
    </location>
</feature>
<feature type="transmembrane region" description="Helical" evidence="2">
    <location>
        <begin position="183"/>
        <end position="203"/>
    </location>
</feature>
<feature type="transmembrane region" description="Helical" evidence="2">
    <location>
        <begin position="210"/>
        <end position="230"/>
    </location>
</feature>
<feature type="site" description="Primary proton acceptor" evidence="1">
    <location>
        <position position="91"/>
    </location>
</feature>
<feature type="modified residue" description="N6-(retinylidene)lysine" evidence="1">
    <location>
        <position position="222"/>
    </location>
</feature>
<dbReference type="EMBL" id="AY596297">
    <property type="protein sequence ID" value="AAV46888.1"/>
    <property type="molecule type" value="Genomic_DNA"/>
</dbReference>
<dbReference type="RefSeq" id="WP_004514987.1">
    <property type="nucleotide sequence ID" value="NZ_CP039138.1"/>
</dbReference>
<dbReference type="SMR" id="Q5V0R5"/>
<dbReference type="STRING" id="272569.rrnAC2030"/>
<dbReference type="PaxDb" id="272569-rrnAC2030"/>
<dbReference type="EnsemblBacteria" id="AAV46888">
    <property type="protein sequence ID" value="AAV46888"/>
    <property type="gene ID" value="rrnAC2030"/>
</dbReference>
<dbReference type="KEGG" id="hma:rrnAC2030"/>
<dbReference type="PATRIC" id="fig|272569.17.peg.2682"/>
<dbReference type="eggNOG" id="arCOG02812">
    <property type="taxonomic scope" value="Archaea"/>
</dbReference>
<dbReference type="HOGENOM" id="CLU_054785_5_1_2"/>
<dbReference type="Proteomes" id="UP000001169">
    <property type="component" value="Chromosome I"/>
</dbReference>
<dbReference type="GO" id="GO:0016020">
    <property type="term" value="C:membrane"/>
    <property type="evidence" value="ECO:0007669"/>
    <property type="project" value="UniProtKB-SubCell"/>
</dbReference>
<dbReference type="GO" id="GO:0005216">
    <property type="term" value="F:monoatomic ion channel activity"/>
    <property type="evidence" value="ECO:0007669"/>
    <property type="project" value="InterPro"/>
</dbReference>
<dbReference type="GO" id="GO:0009881">
    <property type="term" value="F:photoreceptor activity"/>
    <property type="evidence" value="ECO:0007669"/>
    <property type="project" value="UniProtKB-KW"/>
</dbReference>
<dbReference type="GO" id="GO:0007602">
    <property type="term" value="P:phototransduction"/>
    <property type="evidence" value="ECO:0007669"/>
    <property type="project" value="UniProtKB-KW"/>
</dbReference>
<dbReference type="GO" id="GO:1902600">
    <property type="term" value="P:proton transmembrane transport"/>
    <property type="evidence" value="ECO:0007669"/>
    <property type="project" value="UniProtKB-KW"/>
</dbReference>
<dbReference type="CDD" id="cd15244">
    <property type="entry name" value="7tm_bacteriorhodopsin"/>
    <property type="match status" value="1"/>
</dbReference>
<dbReference type="Gene3D" id="1.20.1070.10">
    <property type="entry name" value="Rhodopsin 7-helix transmembrane proteins"/>
    <property type="match status" value="1"/>
</dbReference>
<dbReference type="InterPro" id="IPR001425">
    <property type="entry name" value="Arc/bac/fun_rhodopsins"/>
</dbReference>
<dbReference type="InterPro" id="IPR018229">
    <property type="entry name" value="Rhodopsin_retinal_BS"/>
</dbReference>
<dbReference type="PANTHER" id="PTHR28286">
    <property type="match status" value="1"/>
</dbReference>
<dbReference type="PANTHER" id="PTHR28286:SF2">
    <property type="entry name" value="BACTERIORHODOPSIN _OPSIN, NOPA (EUROFUNG)"/>
    <property type="match status" value="1"/>
</dbReference>
<dbReference type="Pfam" id="PF01036">
    <property type="entry name" value="Bac_rhodopsin"/>
    <property type="match status" value="1"/>
</dbReference>
<dbReference type="PRINTS" id="PR00251">
    <property type="entry name" value="BACTRLOPSIN"/>
</dbReference>
<dbReference type="SMART" id="SM01021">
    <property type="entry name" value="Bac_rhodopsin"/>
    <property type="match status" value="1"/>
</dbReference>
<dbReference type="SUPFAM" id="SSF81321">
    <property type="entry name" value="Family A G protein-coupled receptor-like"/>
    <property type="match status" value="1"/>
</dbReference>
<dbReference type="PROSITE" id="PS00950">
    <property type="entry name" value="BACTERIAL_OPSIN_1"/>
    <property type="match status" value="1"/>
</dbReference>
<protein>
    <recommendedName>
        <fullName>Bacteriorhodopsin-II</fullName>
        <shortName>HmBRII</shortName>
    </recommendedName>
</protein>